<sequence length="346" mass="38087">MNPHAKLISIMSLALGTSITISSNHWILAWTGLEINTLAIIPLISKSHHPRAIEAAIKYFLTQSTASALILFSSMNNAWSTGQWDITQLNHPTSCLILTMAIAIKLGLVPFHFWFPEVLQGSSLITALLLSTLMKLPPMTLLLMTSQSLNPALLTLLAVSSALVGGWMGLNQTQTRKILAFSSISHLGWMIVIIIYNPKLTILTFIIYSLMTSTVFLSLSQIKVLKLSTMLISWTKTPMLNSTIMVTLLSLAGLPPLTGFMPKWLIIQELTKQEMTPVATTIAMLSLLGLFFYLRLAYHSTITLPPNSSNHMKLWRINTTPNTPTAILTVLSISLLPLSPLITTLV</sequence>
<organism>
    <name type="scientific">Coturnix japonica</name>
    <name type="common">Japanese quail</name>
    <name type="synonym">Coturnix coturnix japonica</name>
    <dbReference type="NCBI Taxonomy" id="93934"/>
    <lineage>
        <taxon>Eukaryota</taxon>
        <taxon>Metazoa</taxon>
        <taxon>Chordata</taxon>
        <taxon>Craniata</taxon>
        <taxon>Vertebrata</taxon>
        <taxon>Euteleostomi</taxon>
        <taxon>Archelosauria</taxon>
        <taxon>Archosauria</taxon>
        <taxon>Dinosauria</taxon>
        <taxon>Saurischia</taxon>
        <taxon>Theropoda</taxon>
        <taxon>Coelurosauria</taxon>
        <taxon>Aves</taxon>
        <taxon>Neognathae</taxon>
        <taxon>Galloanserae</taxon>
        <taxon>Galliformes</taxon>
        <taxon>Phasianidae</taxon>
        <taxon>Perdicinae</taxon>
        <taxon>Coturnix</taxon>
    </lineage>
</organism>
<geneLocation type="mitochondrion"/>
<comment type="function">
    <text evidence="1">Core subunit of the mitochondrial membrane respiratory chain NADH dehydrogenase (Complex I) that is believed to belong to the minimal assembly required for catalysis. Complex I functions in the transfer of electrons from NADH to the respiratory chain. The immediate electron acceptor for the enzyme is believed to be ubiquinone (By similarity).</text>
</comment>
<comment type="catalytic activity">
    <reaction>
        <text>a ubiquinone + NADH + 5 H(+)(in) = a ubiquinol + NAD(+) + 4 H(+)(out)</text>
        <dbReference type="Rhea" id="RHEA:29091"/>
        <dbReference type="Rhea" id="RHEA-COMP:9565"/>
        <dbReference type="Rhea" id="RHEA-COMP:9566"/>
        <dbReference type="ChEBI" id="CHEBI:15378"/>
        <dbReference type="ChEBI" id="CHEBI:16389"/>
        <dbReference type="ChEBI" id="CHEBI:17976"/>
        <dbReference type="ChEBI" id="CHEBI:57540"/>
        <dbReference type="ChEBI" id="CHEBI:57945"/>
        <dbReference type="EC" id="7.1.1.2"/>
    </reaction>
</comment>
<comment type="subcellular location">
    <subcellularLocation>
        <location>Mitochondrion inner membrane</location>
        <topology>Multi-pass membrane protein</topology>
    </subcellularLocation>
</comment>
<comment type="similarity">
    <text evidence="3">Belongs to the complex I subunit 2 family.</text>
</comment>
<gene>
    <name type="primary">MT-ND2</name>
    <name type="synonym">MTND2</name>
    <name type="synonym">NADH2</name>
    <name type="synonym">ND2</name>
</gene>
<reference key="1">
    <citation type="journal article" date="1991" name="J. Mol. Evol.">
        <title>Nucleotide sequence and evolution of coding and noncoding regions of a quail mitochondrial genome.</title>
        <authorList>
            <person name="Desjardins P."/>
            <person name="Morais R."/>
        </authorList>
    </citation>
    <scope>NUCLEOTIDE SEQUENCE [GENOMIC DNA]</scope>
    <source>
        <tissue>Liver</tissue>
    </source>
</reference>
<reference key="2">
    <citation type="journal article" date="2001" name="Anim. Genet.">
        <title>Complete sequence of the Japanese quail (Coturnix japonica) mitochondrial genome and its genetic relationship with related species.</title>
        <authorList>
            <person name="Nishibori M."/>
            <person name="Hayashi T."/>
            <person name="Tsudzuki M."/>
            <person name="Yamamoto Y."/>
            <person name="Yasue H."/>
        </authorList>
    </citation>
    <scope>NUCLEOTIDE SEQUENCE [GENOMIC DNA]</scope>
    <source>
        <tissue>Blood</tissue>
    </source>
</reference>
<protein>
    <recommendedName>
        <fullName>NADH-ubiquinone oxidoreductase chain 2</fullName>
        <ecNumber>7.1.1.2</ecNumber>
    </recommendedName>
    <alternativeName>
        <fullName>NADH dehydrogenase subunit 2</fullName>
    </alternativeName>
</protein>
<proteinExistence type="inferred from homology"/>
<accession>P24971</accession>
<accession>Q8SEX2</accession>
<evidence type="ECO:0000250" key="1"/>
<evidence type="ECO:0000255" key="2"/>
<evidence type="ECO:0000305" key="3"/>
<feature type="chain" id="PRO_0000117572" description="NADH-ubiquinone oxidoreductase chain 2">
    <location>
        <begin position="1"/>
        <end position="346"/>
    </location>
</feature>
<feature type="transmembrane region" description="Helical" evidence="2">
    <location>
        <begin position="25"/>
        <end position="45"/>
    </location>
</feature>
<feature type="transmembrane region" description="Helical" evidence="2">
    <location>
        <begin position="52"/>
        <end position="72"/>
    </location>
</feature>
<feature type="transmembrane region" description="Helical" evidence="2">
    <location>
        <begin position="95"/>
        <end position="115"/>
    </location>
</feature>
<feature type="transmembrane region" description="Helical" evidence="2">
    <location>
        <begin position="124"/>
        <end position="144"/>
    </location>
</feature>
<feature type="transmembrane region" description="Helical" evidence="2">
    <location>
        <begin position="149"/>
        <end position="169"/>
    </location>
</feature>
<feature type="transmembrane region" description="Helical" evidence="2">
    <location>
        <begin position="178"/>
        <end position="196"/>
    </location>
</feature>
<feature type="transmembrane region" description="Helical" evidence="2">
    <location>
        <begin position="200"/>
        <end position="219"/>
    </location>
</feature>
<feature type="transmembrane region" description="Helical" evidence="2">
    <location>
        <begin position="247"/>
        <end position="267"/>
    </location>
</feature>
<feature type="transmembrane region" description="Helical" evidence="2">
    <location>
        <begin position="274"/>
        <end position="294"/>
    </location>
</feature>
<feature type="transmembrane region" description="Helical" evidence="2">
    <location>
        <begin position="326"/>
        <end position="346"/>
    </location>
</feature>
<keyword id="KW-0249">Electron transport</keyword>
<keyword id="KW-0472">Membrane</keyword>
<keyword id="KW-0496">Mitochondrion</keyword>
<keyword id="KW-0999">Mitochondrion inner membrane</keyword>
<keyword id="KW-0520">NAD</keyword>
<keyword id="KW-1185">Reference proteome</keyword>
<keyword id="KW-0679">Respiratory chain</keyword>
<keyword id="KW-1278">Translocase</keyword>
<keyword id="KW-0812">Transmembrane</keyword>
<keyword id="KW-1133">Transmembrane helix</keyword>
<keyword id="KW-0813">Transport</keyword>
<keyword id="KW-0830">Ubiquinone</keyword>
<name>NU2M_COTJA</name>
<dbReference type="EC" id="7.1.1.2"/>
<dbReference type="EMBL" id="X57246">
    <property type="protein sequence ID" value="CAA40523.1"/>
    <property type="molecule type" value="Genomic_DNA"/>
</dbReference>
<dbReference type="EMBL" id="AP003195">
    <property type="protein sequence ID" value="BAB62916.1"/>
    <property type="molecule type" value="Genomic_DNA"/>
</dbReference>
<dbReference type="PIR" id="S25423">
    <property type="entry name" value="S25423"/>
</dbReference>
<dbReference type="RefSeq" id="NP_572015.1">
    <property type="nucleotide sequence ID" value="NC_003408.1"/>
</dbReference>
<dbReference type="SMR" id="P24971"/>
<dbReference type="Ensembl" id="ENSCJPT00005000011.1">
    <property type="protein sequence ID" value="ENSCJPP00005000003.1"/>
    <property type="gene ID" value="ENSCJPG00005000011.1"/>
</dbReference>
<dbReference type="GeneID" id="804667"/>
<dbReference type="KEGG" id="cjo:804667"/>
<dbReference type="CTD" id="4536"/>
<dbReference type="GeneTree" id="ENSGT00730000111348"/>
<dbReference type="OrthoDB" id="4092844at2759"/>
<dbReference type="Proteomes" id="UP000694412">
    <property type="component" value="Unassembled WGS sequence"/>
</dbReference>
<dbReference type="GO" id="GO:0005743">
    <property type="term" value="C:mitochondrial inner membrane"/>
    <property type="evidence" value="ECO:0007669"/>
    <property type="project" value="UniProtKB-SubCell"/>
</dbReference>
<dbReference type="GO" id="GO:0045271">
    <property type="term" value="C:respiratory chain complex I"/>
    <property type="evidence" value="ECO:0007669"/>
    <property type="project" value="Ensembl"/>
</dbReference>
<dbReference type="GO" id="GO:0008137">
    <property type="term" value="F:NADH dehydrogenase (ubiquinone) activity"/>
    <property type="evidence" value="ECO:0007669"/>
    <property type="project" value="UniProtKB-EC"/>
</dbReference>
<dbReference type="GO" id="GO:0006120">
    <property type="term" value="P:mitochondrial electron transport, NADH to ubiquinone"/>
    <property type="evidence" value="ECO:0007669"/>
    <property type="project" value="Ensembl"/>
</dbReference>
<dbReference type="GO" id="GO:0032981">
    <property type="term" value="P:mitochondrial respiratory chain complex I assembly"/>
    <property type="evidence" value="ECO:0007669"/>
    <property type="project" value="Ensembl"/>
</dbReference>
<dbReference type="GO" id="GO:0072593">
    <property type="term" value="P:reactive oxygen species metabolic process"/>
    <property type="evidence" value="ECO:0007669"/>
    <property type="project" value="Ensembl"/>
</dbReference>
<dbReference type="InterPro" id="IPR050175">
    <property type="entry name" value="Complex_I_Subunit_2"/>
</dbReference>
<dbReference type="InterPro" id="IPR010933">
    <property type="entry name" value="NADH_DH_su2_C"/>
</dbReference>
<dbReference type="InterPro" id="IPR003917">
    <property type="entry name" value="NADH_UbQ_OxRdtase_chain2"/>
</dbReference>
<dbReference type="InterPro" id="IPR001750">
    <property type="entry name" value="ND/Mrp_TM"/>
</dbReference>
<dbReference type="PANTHER" id="PTHR46552">
    <property type="entry name" value="NADH-UBIQUINONE OXIDOREDUCTASE CHAIN 2"/>
    <property type="match status" value="1"/>
</dbReference>
<dbReference type="PANTHER" id="PTHR46552:SF1">
    <property type="entry name" value="NADH-UBIQUINONE OXIDOREDUCTASE CHAIN 2"/>
    <property type="match status" value="1"/>
</dbReference>
<dbReference type="Pfam" id="PF06444">
    <property type="entry name" value="NADH_dehy_S2_C"/>
    <property type="match status" value="1"/>
</dbReference>
<dbReference type="Pfam" id="PF00361">
    <property type="entry name" value="Proton_antipo_M"/>
    <property type="match status" value="1"/>
</dbReference>
<dbReference type="PRINTS" id="PR01436">
    <property type="entry name" value="NADHDHGNASE2"/>
</dbReference>